<feature type="chain" id="PRO_0000132208" description="Small ribosomal subunit protein uS13m">
    <location>
        <begin position="1"/>
        <end position="116"/>
    </location>
</feature>
<feature type="region of interest" description="Disordered" evidence="2">
    <location>
        <begin position="92"/>
        <end position="116"/>
    </location>
</feature>
<evidence type="ECO:0000250" key="1"/>
<evidence type="ECO:0000256" key="2">
    <source>
        <dbReference type="SAM" id="MobiDB-lite"/>
    </source>
</evidence>
<evidence type="ECO:0000305" key="3"/>
<gene>
    <name type="primary">RPS13</name>
</gene>
<keyword id="KW-0496">Mitochondrion</keyword>
<keyword id="KW-1185">Reference proteome</keyword>
<keyword id="KW-0687">Ribonucleoprotein</keyword>
<keyword id="KW-0689">Ribosomal protein</keyword>
<keyword id="KW-0694">RNA-binding</keyword>
<keyword id="KW-0699">rRNA-binding</keyword>
<organism>
    <name type="scientific">Triticum aestivum</name>
    <name type="common">Wheat</name>
    <dbReference type="NCBI Taxonomy" id="4565"/>
    <lineage>
        <taxon>Eukaryota</taxon>
        <taxon>Viridiplantae</taxon>
        <taxon>Streptophyta</taxon>
        <taxon>Embryophyta</taxon>
        <taxon>Tracheophyta</taxon>
        <taxon>Spermatophyta</taxon>
        <taxon>Magnoliopsida</taxon>
        <taxon>Liliopsida</taxon>
        <taxon>Poales</taxon>
        <taxon>Poaceae</taxon>
        <taxon>BOP clade</taxon>
        <taxon>Pooideae</taxon>
        <taxon>Triticodae</taxon>
        <taxon>Triticeae</taxon>
        <taxon>Triticinae</taxon>
        <taxon>Triticum</taxon>
    </lineage>
</organism>
<accession>P07924</accession>
<reference key="1">
    <citation type="journal article" date="1987" name="Nucleic Acids Res.">
        <title>The mitochondrial S13 ribosomal protein gene is silent in wheat embryos and seedlings.</title>
        <authorList>
            <person name="Bonen L."/>
        </authorList>
    </citation>
    <scope>NUCLEOTIDE SEQUENCE [GENOMIC DNA]</scope>
</reference>
<name>RT13_WHEAT</name>
<proteinExistence type="inferred from homology"/>
<protein>
    <recommendedName>
        <fullName evidence="3">Small ribosomal subunit protein uS13m</fullName>
    </recommendedName>
    <alternativeName>
        <fullName>Ribosomal protein S13, mitochondrial</fullName>
    </alternativeName>
</protein>
<geneLocation type="mitochondrion"/>
<dbReference type="EMBL" id="Y00520">
    <property type="protein sequence ID" value="CAA68574.1"/>
    <property type="molecule type" value="Genomic_DNA"/>
</dbReference>
<dbReference type="PIR" id="S00544">
    <property type="entry name" value="R3WT13"/>
</dbReference>
<dbReference type="RefSeq" id="YP_398395.1">
    <property type="nucleotide sequence ID" value="NC_007579.1"/>
</dbReference>
<dbReference type="SMR" id="P07924"/>
<dbReference type="PaxDb" id="4565-EPlTAEP00000010118"/>
<dbReference type="EnsemblPlants" id="TraesARI1D03G00477660.1">
    <property type="protein sequence ID" value="TraesARI1D03G00477660.1.CDS1"/>
    <property type="gene ID" value="TraesARI1D03G00477660"/>
</dbReference>
<dbReference type="EnsemblPlants" id="TraesARI2B03G01096310.1">
    <property type="protein sequence ID" value="TraesARI2B03G01096310.1.CDS1"/>
    <property type="gene ID" value="TraesARI2B03G01096310"/>
</dbReference>
<dbReference type="EnsemblPlants" id="TraesARI4D03G02497310.1">
    <property type="protein sequence ID" value="TraesARI4D03G02497310.1.CDS1"/>
    <property type="gene ID" value="TraesARI4D03G02497310"/>
</dbReference>
<dbReference type="EnsemblPlants" id="TraesARI7A03G03844710.1">
    <property type="protein sequence ID" value="TraesARI7A03G03844710.1.CDS1"/>
    <property type="gene ID" value="TraesARI7A03G03844710"/>
</dbReference>
<dbReference type="EnsemblPlants" id="TraesARI7D03G04473120.1">
    <property type="protein sequence ID" value="TraesARI7D03G04473120.1.CDS1"/>
    <property type="gene ID" value="TraesARI7D03G04473120"/>
</dbReference>
<dbReference type="EnsemblPlants" id="TraesARIUn03G04719880.1">
    <property type="protein sequence ID" value="TraesARIUn03G04719880.1.CDS1"/>
    <property type="gene ID" value="TraesARIUn03G04719880"/>
</dbReference>
<dbReference type="EnsemblPlants" id="TraesCS1D02G152500.1">
    <property type="protein sequence ID" value="TraesCS1D02G152500.1.cds1"/>
    <property type="gene ID" value="TraesCS1D02G152500"/>
</dbReference>
<dbReference type="EnsemblPlants" id="TraesCS1D03G0393700.1">
    <property type="protein sequence ID" value="TraesCS1D03G0393700.1.CDS1"/>
    <property type="gene ID" value="TraesCS1D03G0393700"/>
</dbReference>
<dbReference type="EnsemblPlants" id="TraesCS2D02G569200.1">
    <property type="protein sequence ID" value="TraesCS2D02G569200.1.cds1"/>
    <property type="gene ID" value="TraesCS2D02G569200"/>
</dbReference>
<dbReference type="EnsemblPlants" id="TraesCS2D03G1335900.1">
    <property type="protein sequence ID" value="TraesCS2D03G1335900.1.CDS1"/>
    <property type="gene ID" value="TraesCS2D03G1335900"/>
</dbReference>
<dbReference type="EnsemblPlants" id="TraesCS4D02G140000.1">
    <property type="protein sequence ID" value="TraesCS4D02G140000.1.cds1"/>
    <property type="gene ID" value="TraesCS4D02G140000"/>
</dbReference>
<dbReference type="EnsemblPlants" id="TraesCS4D03G0281100.1">
    <property type="protein sequence ID" value="TraesCS4D03G0281100.1.CDS1"/>
    <property type="gene ID" value="TraesCS4D03G0281100"/>
</dbReference>
<dbReference type="EnsemblPlants" id="TraesJAG1D03G00471490.1">
    <property type="protein sequence ID" value="TraesJAG1D03G00471490.1.CDS1"/>
    <property type="gene ID" value="TraesJAG1D03G00471490"/>
</dbReference>
<dbReference type="EnsemblPlants" id="TraesJAG4A03G02219790.1">
    <property type="protein sequence ID" value="TraesJAG4A03G02219790.1.CDS1"/>
    <property type="gene ID" value="TraesJAG4A03G02219790"/>
</dbReference>
<dbReference type="EnsemblPlants" id="TraesJAG7A03G03854440.1">
    <property type="protein sequence ID" value="TraesJAG7A03G03854440.1.CDS1"/>
    <property type="gene ID" value="TraesJAG7A03G03854440"/>
</dbReference>
<dbReference type="EnsemblPlants" id="TraesJAGUn03G04543940.1">
    <property type="protein sequence ID" value="TraesJAGUn03G04543940.1.CDS1"/>
    <property type="gene ID" value="TraesJAGUn03G04543940"/>
</dbReference>
<dbReference type="EnsemblPlants" id="TraesJAGUn03G04592750.1">
    <property type="protein sequence ID" value="TraesJAGUn03G04592750.1.CDS1"/>
    <property type="gene ID" value="TraesJAGUn03G04592750"/>
</dbReference>
<dbReference type="EnsemblPlants" id="TraesJUL1D03G00474890.1">
    <property type="protein sequence ID" value="TraesJUL1D03G00474890.1.CDS1"/>
    <property type="gene ID" value="TraesJUL1D03G00474890"/>
</dbReference>
<dbReference type="EnsemblPlants" id="TraesJUL4D03G02477610.1">
    <property type="protein sequence ID" value="TraesJUL4D03G02477610.1.CDS1"/>
    <property type="gene ID" value="TraesJUL4D03G02477610"/>
</dbReference>
<dbReference type="EnsemblPlants" id="TraesJUL7A03G03908780.1">
    <property type="protein sequence ID" value="TraesJUL7A03G03908780.1.CDS1"/>
    <property type="gene ID" value="TraesJUL7A03G03908780"/>
</dbReference>
<dbReference type="EnsemblPlants" id="TraesJUL7D03G04508370.1">
    <property type="protein sequence ID" value="TraesJUL7D03G04508370.1.CDS1"/>
    <property type="gene ID" value="TraesJUL7D03G04508370"/>
</dbReference>
<dbReference type="EnsemblPlants" id="TraesJUL7D03G04523720.1">
    <property type="protein sequence ID" value="TraesJUL7D03G04523720.1.CDS1"/>
    <property type="gene ID" value="TraesJUL7D03G04523720"/>
</dbReference>
<dbReference type="EnsemblPlants" id="TraesJUL7D03G04523900.1">
    <property type="protein sequence ID" value="TraesJUL7D03G04523900.1.CDS1"/>
    <property type="gene ID" value="TraesJUL7D03G04523900"/>
</dbReference>
<dbReference type="EnsemblPlants" id="TraesKAR1A01G0301490.1">
    <property type="protein sequence ID" value="cds.TraesKAR1A01G0301490.1"/>
    <property type="gene ID" value="TraesKAR1A01G0301490"/>
</dbReference>
<dbReference type="EnsemblPlants" id="TraesKAR1D01G0154460.1">
    <property type="protein sequence ID" value="cds.TraesKAR1D01G0154460.1"/>
    <property type="gene ID" value="TraesKAR1D01G0154460"/>
</dbReference>
<dbReference type="EnsemblPlants" id="TraesKAR7A01G0113110.1">
    <property type="protein sequence ID" value="cds.TraesKAR7A01G0113110.1"/>
    <property type="gene ID" value="TraesKAR7A01G0113110"/>
</dbReference>
<dbReference type="EnsemblPlants" id="TraesKAR7D01G0441640.1">
    <property type="protein sequence ID" value="cds.TraesKAR7D01G0441640.1"/>
    <property type="gene ID" value="TraesKAR7D01G0441640"/>
</dbReference>
<dbReference type="EnsemblPlants" id="TraesKARUn01G0031230.1">
    <property type="protein sequence ID" value="cds.TraesKARUn01G0031230.1"/>
    <property type="gene ID" value="TraesKARUn01G0031230"/>
</dbReference>
<dbReference type="EnsemblPlants" id="TraesKARUn01G0031600.1">
    <property type="protein sequence ID" value="cds.TraesKARUn01G0031600.1"/>
    <property type="gene ID" value="TraesKARUn01G0031600"/>
</dbReference>
<dbReference type="EnsemblPlants" id="TraesKARUn01G0067600.1">
    <property type="protein sequence ID" value="cds.TraesKARUn01G0067600.1"/>
    <property type="gene ID" value="TraesKARUn01G0067600"/>
</dbReference>
<dbReference type="EnsemblPlants" id="TraesKARUn01G0099700.1">
    <property type="protein sequence ID" value="cds.TraesKARUn01G0099700.1"/>
    <property type="gene ID" value="TraesKARUn01G0099700"/>
</dbReference>
<dbReference type="EnsemblPlants" id="TraesKARUn01G0121440.1">
    <property type="protein sequence ID" value="cds.TraesKARUn01G0121440.1"/>
    <property type="gene ID" value="TraesKARUn01G0121440"/>
</dbReference>
<dbReference type="EnsemblPlants" id="TraesKARUn01G0124130.1">
    <property type="protein sequence ID" value="cds.TraesKARUn01G0124130.1"/>
    <property type="gene ID" value="TraesKARUn01G0124130"/>
</dbReference>
<dbReference type="EnsemblPlants" id="TraesKARUn01G0126110.1">
    <property type="protein sequence ID" value="cds.TraesKARUn01G0126110.1"/>
    <property type="gene ID" value="TraesKARUn01G0126110"/>
</dbReference>
<dbReference type="EnsemblPlants" id="TraesKARUn01G0132150.1">
    <property type="protein sequence ID" value="cds.TraesKARUn01G0132150.1"/>
    <property type="gene ID" value="TraesKARUn01G0132150"/>
</dbReference>
<dbReference type="EnsemblPlants" id="TraesKARUn01G0136880.1">
    <property type="protein sequence ID" value="cds.TraesKARUn01G0136880.1"/>
    <property type="gene ID" value="TraesKARUn01G0136880"/>
</dbReference>
<dbReference type="EnsemblPlants" id="TraesKARUn01G0143060.1">
    <property type="protein sequence ID" value="cds.TraesKARUn01G0143060.1"/>
    <property type="gene ID" value="TraesKARUn01G0143060"/>
</dbReference>
<dbReference type="EnsemblPlants" id="TraesKARUn01G0146110.1">
    <property type="protein sequence ID" value="cds.TraesKARUn01G0146110.1"/>
    <property type="gene ID" value="TraesKARUn01G0146110"/>
</dbReference>
<dbReference type="EnsemblPlants" id="TraesKARUn01G0148470.1">
    <property type="protein sequence ID" value="cds.TraesKARUn01G0148470.1"/>
    <property type="gene ID" value="TraesKARUn01G0148470"/>
</dbReference>
<dbReference type="EnsemblPlants" id="TraesKARUn01G0148550.1">
    <property type="protein sequence ID" value="cds.TraesKARUn01G0148550.1"/>
    <property type="gene ID" value="TraesKARUn01G0148550"/>
</dbReference>
<dbReference type="EnsemblPlants" id="TraesKARUn01G0150970.1">
    <property type="protein sequence ID" value="cds.TraesKARUn01G0150970.1"/>
    <property type="gene ID" value="TraesKARUn01G0150970"/>
</dbReference>
<dbReference type="EnsemblPlants" id="TraesKARUn01G0155900.1">
    <property type="protein sequence ID" value="cds.TraesKARUn01G0155900.1"/>
    <property type="gene ID" value="TraesKARUn01G0155900"/>
</dbReference>
<dbReference type="EnsemblPlants" id="TraesKARUn01G0160620.1">
    <property type="protein sequence ID" value="cds.TraesKARUn01G0160620.1"/>
    <property type="gene ID" value="TraesKARUn01G0160620"/>
</dbReference>
<dbReference type="EnsemblPlants" id="TraesKARUn01G0162970.1">
    <property type="protein sequence ID" value="cds.TraesKARUn01G0162970.1"/>
    <property type="gene ID" value="TraesKARUn01G0162970"/>
</dbReference>
<dbReference type="EnsemblPlants" id="TraesKARUn01G0165070.1">
    <property type="protein sequence ID" value="cds.TraesKARUn01G0165070.1"/>
    <property type="gene ID" value="TraesKARUn01G0165070"/>
</dbReference>
<dbReference type="EnsemblPlants" id="TraesKARUn01G0168100.1">
    <property type="protein sequence ID" value="cds.TraesKARUn01G0168100.1"/>
    <property type="gene ID" value="TraesKARUn01G0168100"/>
</dbReference>
<dbReference type="EnsemblPlants" id="TraesLAC1D03G00475610.1">
    <property type="protein sequence ID" value="TraesLAC1D03G00475610.1.CDS1"/>
    <property type="gene ID" value="TraesLAC1D03G00475610"/>
</dbReference>
<dbReference type="EnsemblPlants" id="TraesLAC3B03G01574820.1">
    <property type="protein sequence ID" value="TraesLAC3B03G01574820.1.CDS1"/>
    <property type="gene ID" value="TraesLAC3B03G01574820"/>
</dbReference>
<dbReference type="EnsemblPlants" id="TraesLAC4D03G02411780.1">
    <property type="protein sequence ID" value="TraesLAC4D03G02411780.1.CDS1"/>
    <property type="gene ID" value="TraesLAC4D03G02411780"/>
</dbReference>
<dbReference type="EnsemblPlants" id="TraesLAC7A03G03826270.1">
    <property type="protein sequence ID" value="TraesLAC7A03G03826270.1.CDS1"/>
    <property type="gene ID" value="TraesLAC7A03G03826270"/>
</dbReference>
<dbReference type="EnsemblPlants" id="TraesLDM1D03G00474740.1">
    <property type="protein sequence ID" value="TraesLDM1D03G00474740.1.CDS1"/>
    <property type="gene ID" value="TraesLDM1D03G00474740"/>
</dbReference>
<dbReference type="EnsemblPlants" id="TraesLDM2B03G00832080.1">
    <property type="protein sequence ID" value="TraesLDM2B03G00832080.1.CDS1"/>
    <property type="gene ID" value="TraesLDM2B03G00832080"/>
</dbReference>
<dbReference type="EnsemblPlants" id="TraesLDM4A03G02219320.1">
    <property type="protein sequence ID" value="TraesLDM4A03G02219320.1.CDS1"/>
    <property type="gene ID" value="TraesLDM4A03G02219320"/>
</dbReference>
<dbReference type="EnsemblPlants" id="TraesLDM4D03G02460780.1">
    <property type="protein sequence ID" value="TraesLDM4D03G02460780.1.CDS1"/>
    <property type="gene ID" value="TraesLDM4D03G02460780"/>
</dbReference>
<dbReference type="EnsemblPlants" id="TraesMAC1D03G00471620.1">
    <property type="protein sequence ID" value="TraesMAC1D03G00471620.1.CDS1"/>
    <property type="gene ID" value="TraesMAC1D03G00471620"/>
</dbReference>
<dbReference type="EnsemblPlants" id="TraesMAC3A03G01529430.1">
    <property type="protein sequence ID" value="TraesMAC3A03G01529430.1.CDS1"/>
    <property type="gene ID" value="TraesMAC3A03G01529430"/>
</dbReference>
<dbReference type="EnsemblPlants" id="TraesMAC4D03G02456750.1">
    <property type="protein sequence ID" value="TraesMAC4D03G02456750.1.CDS1"/>
    <property type="gene ID" value="TraesMAC4D03G02456750"/>
</dbReference>
<dbReference type="EnsemblPlants" id="TraesMAC7A03G03874240.1">
    <property type="protein sequence ID" value="TraesMAC7A03G03874240.1.CDS1"/>
    <property type="gene ID" value="TraesMAC7A03G03874240"/>
</dbReference>
<dbReference type="EnsemblPlants" id="TraesNOR1D03G00479540.1">
    <property type="protein sequence ID" value="TraesNOR1D03G00479540.1.CDS1"/>
    <property type="gene ID" value="TraesNOR1D03G00479540"/>
</dbReference>
<dbReference type="EnsemblPlants" id="TraesNOR4D03G02476240.1">
    <property type="protein sequence ID" value="TraesNOR4D03G02476240.1.CDS1"/>
    <property type="gene ID" value="TraesNOR4D03G02476240"/>
</dbReference>
<dbReference type="EnsemblPlants" id="TraesNORUn03G04630870.1">
    <property type="protein sequence ID" value="TraesNORUn03G04630870.1.CDS1"/>
    <property type="gene ID" value="TraesNORUn03G04630870"/>
</dbReference>
<dbReference type="EnsemblPlants" id="TraesPARA_EIv1.0_0265780.1">
    <property type="protein sequence ID" value="TraesPARA_EIv1.0_0265780.1.CDS1"/>
    <property type="gene ID" value="TraesPARA_EIv1.0_0265780"/>
</dbReference>
<dbReference type="EnsemblPlants" id="TraesPARA_EIv1.0_0614910.1">
    <property type="protein sequence ID" value="TraesPARA_EIv1.0_0614910.1.CDS1"/>
    <property type="gene ID" value="TraesPARA_EIv1.0_0614910"/>
</dbReference>
<dbReference type="EnsemblPlants" id="TraesPARA_EIv1.0_1436480.1">
    <property type="protein sequence ID" value="TraesPARA_EIv1.0_1436480.1.CDS1"/>
    <property type="gene ID" value="TraesPARA_EIv1.0_1436480"/>
</dbReference>
<dbReference type="EnsemblPlants" id="TraesPARA_EIv1.0_2273090.1">
    <property type="protein sequence ID" value="TraesPARA_EIv1.0_2273090.1.CDS1"/>
    <property type="gene ID" value="TraesPARA_EIv1.0_2273090"/>
</dbReference>
<dbReference type="EnsemblPlants" id="TraesPARA_EIv1.0_2397030.1">
    <property type="protein sequence ID" value="TraesPARA_EIv1.0_2397030.1.CDS1"/>
    <property type="gene ID" value="TraesPARA_EIv1.0_2397030"/>
</dbReference>
<dbReference type="EnsemblPlants" id="TraesPARA_EIv1.0_2630530.1">
    <property type="protein sequence ID" value="TraesPARA_EIv1.0_2630530.1.CDS1"/>
    <property type="gene ID" value="TraesPARA_EIv1.0_2630530"/>
</dbReference>
<dbReference type="EnsemblPlants" id="TraesPARA_EIv1.0_2670670.1">
    <property type="protein sequence ID" value="TraesPARA_EIv1.0_2670670.1.CDS1"/>
    <property type="gene ID" value="TraesPARA_EIv1.0_2670670"/>
</dbReference>
<dbReference type="EnsemblPlants" id="TraesPARA_EIv1.0_2672080.1">
    <property type="protein sequence ID" value="TraesPARA_EIv1.0_2672080.1.CDS1"/>
    <property type="gene ID" value="TraesPARA_EIv1.0_2672080"/>
</dbReference>
<dbReference type="EnsemblPlants" id="TraesPARA_EIv1.0_2675430.1">
    <property type="protein sequence ID" value="TraesPARA_EIv1.0_2675430.1.CDS1"/>
    <property type="gene ID" value="TraesPARA_EIv1.0_2675430"/>
</dbReference>
<dbReference type="EnsemblPlants" id="TraesPARA_EIv1.0_2675630.1">
    <property type="protein sequence ID" value="TraesPARA_EIv1.0_2675630.1.CDS1"/>
    <property type="gene ID" value="TraesPARA_EIv1.0_2675630"/>
</dbReference>
<dbReference type="EnsemblPlants" id="TraesPARA_EIv1.0_2678240.1">
    <property type="protein sequence ID" value="TraesPARA_EIv1.0_2678240.1.CDS1"/>
    <property type="gene ID" value="TraesPARA_EIv1.0_2678240"/>
</dbReference>
<dbReference type="EnsemblPlants" id="TraesRN1A0100066400.1">
    <property type="protein sequence ID" value="TraesRN1A0100066400.1"/>
    <property type="gene ID" value="TraesRN1A0100066400"/>
</dbReference>
<dbReference type="EnsemblPlants" id="TraesRN1A0100066500.1">
    <property type="protein sequence ID" value="TraesRN1A0100066500.1"/>
    <property type="gene ID" value="TraesRN1A0100066500"/>
</dbReference>
<dbReference type="EnsemblPlants" id="TraesRN1A0100066600.1">
    <property type="protein sequence ID" value="TraesRN1A0100066600.1"/>
    <property type="gene ID" value="TraesRN1A0100066600"/>
</dbReference>
<dbReference type="EnsemblPlants" id="TraesRN4D0100290500.1">
    <property type="protein sequence ID" value="TraesRN4D0100290500.1"/>
    <property type="gene ID" value="TraesRN4D0100290500"/>
</dbReference>
<dbReference type="EnsemblPlants" id="TraesRN4D0100290600.1">
    <property type="protein sequence ID" value="TraesRN4D0100290600.1"/>
    <property type="gene ID" value="TraesRN4D0100290600"/>
</dbReference>
<dbReference type="EnsemblPlants" id="TraesRN7D0101129100.1">
    <property type="protein sequence ID" value="TraesRN7D0101129100.1"/>
    <property type="gene ID" value="TraesRN7D0101129100"/>
</dbReference>
<dbReference type="EnsemblPlants" id="TraesSTA1D03G00470720.1">
    <property type="protein sequence ID" value="TraesSTA1D03G00470720.1.CDS1"/>
    <property type="gene ID" value="TraesSTA1D03G00470720"/>
</dbReference>
<dbReference type="EnsemblPlants" id="TraesSTA2B03G00936880.1">
    <property type="protein sequence ID" value="TraesSTA2B03G00936880.1.CDS1"/>
    <property type="gene ID" value="TraesSTA2B03G00936880"/>
</dbReference>
<dbReference type="EnsemblPlants" id="TraesSTA4A03G02216460.1">
    <property type="protein sequence ID" value="TraesSTA4A03G02216460.1.CDS1"/>
    <property type="gene ID" value="TraesSTA4A03G02216460"/>
</dbReference>
<dbReference type="EnsemblPlants" id="TraesSTA7A03G03868520.1">
    <property type="protein sequence ID" value="TraesSTA7A03G03868520.1.CDS1"/>
    <property type="gene ID" value="TraesSTA7A03G03868520"/>
</dbReference>
<dbReference type="EnsemblPlants" id="TraesSYM1D03G00478610.1">
    <property type="protein sequence ID" value="TraesSYM1D03G00478610.1.CDS1"/>
    <property type="gene ID" value="TraesSYM1D03G00478610"/>
</dbReference>
<dbReference type="EnsemblPlants" id="TraesSYM3D03G01832390.1">
    <property type="protein sequence ID" value="TraesSYM3D03G01832390.1.CDS1"/>
    <property type="gene ID" value="TraesSYM3D03G01832390"/>
</dbReference>
<dbReference type="EnsemblPlants" id="TraesSYM4D03G02486040.1">
    <property type="protein sequence ID" value="TraesSYM4D03G02486040.1.CDS1"/>
    <property type="gene ID" value="TraesSYM4D03G02486040"/>
</dbReference>
<dbReference type="EnsemblPlants" id="TraesSYM7D03G04533700.1">
    <property type="protein sequence ID" value="TraesSYM7D03G04533700.1.CDS1"/>
    <property type="gene ID" value="TraesSYM7D03G04533700"/>
</dbReference>
<dbReference type="Gramene" id="TraesARI1D03G00477660.1">
    <property type="protein sequence ID" value="TraesARI1D03G00477660.1.CDS1"/>
    <property type="gene ID" value="TraesARI1D03G00477660"/>
</dbReference>
<dbReference type="Gramene" id="TraesARI2B03G01096310.1">
    <property type="protein sequence ID" value="TraesARI2B03G01096310.1.CDS1"/>
    <property type="gene ID" value="TraesARI2B03G01096310"/>
</dbReference>
<dbReference type="Gramene" id="TraesARI4D03G02497310.1">
    <property type="protein sequence ID" value="TraesARI4D03G02497310.1.CDS1"/>
    <property type="gene ID" value="TraesARI4D03G02497310"/>
</dbReference>
<dbReference type="Gramene" id="TraesARI7A03G03844710.1">
    <property type="protein sequence ID" value="TraesARI7A03G03844710.1.CDS1"/>
    <property type="gene ID" value="TraesARI7A03G03844710"/>
</dbReference>
<dbReference type="Gramene" id="TraesARI7D03G04473120.1">
    <property type="protein sequence ID" value="TraesARI7D03G04473120.1.CDS1"/>
    <property type="gene ID" value="TraesARI7D03G04473120"/>
</dbReference>
<dbReference type="Gramene" id="TraesARIUn03G04719880.1">
    <property type="protein sequence ID" value="TraesARIUn03G04719880.1.CDS1"/>
    <property type="gene ID" value="TraesARIUn03G04719880"/>
</dbReference>
<dbReference type="Gramene" id="TraesCS1D02G152500.1">
    <property type="protein sequence ID" value="TraesCS1D02G152500.1.cds1"/>
    <property type="gene ID" value="TraesCS1D02G152500"/>
</dbReference>
<dbReference type="Gramene" id="TraesCS1D03G0393700.1">
    <property type="protein sequence ID" value="TraesCS1D03G0393700.1.CDS1"/>
    <property type="gene ID" value="TraesCS1D03G0393700"/>
</dbReference>
<dbReference type="Gramene" id="TraesCS2D02G569200.1">
    <property type="protein sequence ID" value="TraesCS2D02G569200.1.cds1"/>
    <property type="gene ID" value="TraesCS2D02G569200"/>
</dbReference>
<dbReference type="Gramene" id="TraesCS2D03G1335900.1">
    <property type="protein sequence ID" value="TraesCS2D03G1335900.1.CDS1"/>
    <property type="gene ID" value="TraesCS2D03G1335900"/>
</dbReference>
<dbReference type="Gramene" id="TraesCS4D02G140000.1">
    <property type="protein sequence ID" value="TraesCS4D02G140000.1.cds1"/>
    <property type="gene ID" value="TraesCS4D02G140000"/>
</dbReference>
<dbReference type="Gramene" id="TraesCS4D03G0281100.1">
    <property type="protein sequence ID" value="TraesCS4D03G0281100.1.CDS1"/>
    <property type="gene ID" value="TraesCS4D03G0281100"/>
</dbReference>
<dbReference type="Gramene" id="TraesJAG1D03G00471490.1">
    <property type="protein sequence ID" value="TraesJAG1D03G00471490.1.CDS1"/>
    <property type="gene ID" value="TraesJAG1D03G00471490"/>
</dbReference>
<dbReference type="Gramene" id="TraesJAG4A03G02219790.1">
    <property type="protein sequence ID" value="TraesJAG4A03G02219790.1.CDS1"/>
    <property type="gene ID" value="TraesJAG4A03G02219790"/>
</dbReference>
<dbReference type="Gramene" id="TraesJAG7A03G03854440.1">
    <property type="protein sequence ID" value="TraesJAG7A03G03854440.1.CDS1"/>
    <property type="gene ID" value="TraesJAG7A03G03854440"/>
</dbReference>
<dbReference type="Gramene" id="TraesJAGUn03G04543940.1">
    <property type="protein sequence ID" value="TraesJAGUn03G04543940.1.CDS1"/>
    <property type="gene ID" value="TraesJAGUn03G04543940"/>
</dbReference>
<dbReference type="Gramene" id="TraesJAGUn03G04592750.1">
    <property type="protein sequence ID" value="TraesJAGUn03G04592750.1.CDS1"/>
    <property type="gene ID" value="TraesJAGUn03G04592750"/>
</dbReference>
<dbReference type="Gramene" id="TraesJUL1D03G00474890.1">
    <property type="protein sequence ID" value="TraesJUL1D03G00474890.1.CDS1"/>
    <property type="gene ID" value="TraesJUL1D03G00474890"/>
</dbReference>
<dbReference type="Gramene" id="TraesJUL4D03G02477610.1">
    <property type="protein sequence ID" value="TraesJUL4D03G02477610.1.CDS1"/>
    <property type="gene ID" value="TraesJUL4D03G02477610"/>
</dbReference>
<dbReference type="Gramene" id="TraesJUL7A03G03908780.1">
    <property type="protein sequence ID" value="TraesJUL7A03G03908780.1.CDS1"/>
    <property type="gene ID" value="TraesJUL7A03G03908780"/>
</dbReference>
<dbReference type="Gramene" id="TraesJUL7D03G04508370.1">
    <property type="protein sequence ID" value="TraesJUL7D03G04508370.1.CDS1"/>
    <property type="gene ID" value="TraesJUL7D03G04508370"/>
</dbReference>
<dbReference type="Gramene" id="TraesJUL7D03G04523720.1">
    <property type="protein sequence ID" value="TraesJUL7D03G04523720.1.CDS1"/>
    <property type="gene ID" value="TraesJUL7D03G04523720"/>
</dbReference>
<dbReference type="Gramene" id="TraesJUL7D03G04523900.1">
    <property type="protein sequence ID" value="TraesJUL7D03G04523900.1.CDS1"/>
    <property type="gene ID" value="TraesJUL7D03G04523900"/>
</dbReference>
<dbReference type="Gramene" id="TraesKAR1A01G0301490.1">
    <property type="protein sequence ID" value="cds.TraesKAR1A01G0301490.1"/>
    <property type="gene ID" value="TraesKAR1A01G0301490"/>
</dbReference>
<dbReference type="Gramene" id="TraesKAR1D01G0154460.1">
    <property type="protein sequence ID" value="cds.TraesKAR1D01G0154460.1"/>
    <property type="gene ID" value="TraesKAR1D01G0154460"/>
</dbReference>
<dbReference type="Gramene" id="TraesKAR7A01G0113110.1">
    <property type="protein sequence ID" value="cds.TraesKAR7A01G0113110.1"/>
    <property type="gene ID" value="TraesKAR7A01G0113110"/>
</dbReference>
<dbReference type="Gramene" id="TraesKAR7D01G0441640.1">
    <property type="protein sequence ID" value="cds.TraesKAR7D01G0441640.1"/>
    <property type="gene ID" value="TraesKAR7D01G0441640"/>
</dbReference>
<dbReference type="Gramene" id="TraesKARUn01G0031230.1">
    <property type="protein sequence ID" value="cds.TraesKARUn01G0031230.1"/>
    <property type="gene ID" value="TraesKARUn01G0031230"/>
</dbReference>
<dbReference type="Gramene" id="TraesKARUn01G0031600.1">
    <property type="protein sequence ID" value="cds.TraesKARUn01G0031600.1"/>
    <property type="gene ID" value="TraesKARUn01G0031600"/>
</dbReference>
<dbReference type="Gramene" id="TraesKARUn01G0067600.1">
    <property type="protein sequence ID" value="cds.TraesKARUn01G0067600.1"/>
    <property type="gene ID" value="TraesKARUn01G0067600"/>
</dbReference>
<dbReference type="Gramene" id="TraesKARUn01G0099700.1">
    <property type="protein sequence ID" value="cds.TraesKARUn01G0099700.1"/>
    <property type="gene ID" value="TraesKARUn01G0099700"/>
</dbReference>
<dbReference type="Gramene" id="TraesKARUn01G0121440.1">
    <property type="protein sequence ID" value="cds.TraesKARUn01G0121440.1"/>
    <property type="gene ID" value="TraesKARUn01G0121440"/>
</dbReference>
<dbReference type="Gramene" id="TraesKARUn01G0124130.1">
    <property type="protein sequence ID" value="cds.TraesKARUn01G0124130.1"/>
    <property type="gene ID" value="TraesKARUn01G0124130"/>
</dbReference>
<dbReference type="Gramene" id="TraesKARUn01G0126110.1">
    <property type="protein sequence ID" value="cds.TraesKARUn01G0126110.1"/>
    <property type="gene ID" value="TraesKARUn01G0126110"/>
</dbReference>
<dbReference type="Gramene" id="TraesKARUn01G0132150.1">
    <property type="protein sequence ID" value="cds.TraesKARUn01G0132150.1"/>
    <property type="gene ID" value="TraesKARUn01G0132150"/>
</dbReference>
<dbReference type="Gramene" id="TraesKARUn01G0136880.1">
    <property type="protein sequence ID" value="cds.TraesKARUn01G0136880.1"/>
    <property type="gene ID" value="TraesKARUn01G0136880"/>
</dbReference>
<dbReference type="Gramene" id="TraesKARUn01G0143060.1">
    <property type="protein sequence ID" value="cds.TraesKARUn01G0143060.1"/>
    <property type="gene ID" value="TraesKARUn01G0143060"/>
</dbReference>
<dbReference type="Gramene" id="TraesKARUn01G0146110.1">
    <property type="protein sequence ID" value="cds.TraesKARUn01G0146110.1"/>
    <property type="gene ID" value="TraesKARUn01G0146110"/>
</dbReference>
<dbReference type="Gramene" id="TraesKARUn01G0148470.1">
    <property type="protein sequence ID" value="cds.TraesKARUn01G0148470.1"/>
    <property type="gene ID" value="TraesKARUn01G0148470"/>
</dbReference>
<dbReference type="Gramene" id="TraesKARUn01G0148550.1">
    <property type="protein sequence ID" value="cds.TraesKARUn01G0148550.1"/>
    <property type="gene ID" value="TraesKARUn01G0148550"/>
</dbReference>
<dbReference type="Gramene" id="TraesKARUn01G0150970.1">
    <property type="protein sequence ID" value="cds.TraesKARUn01G0150970.1"/>
    <property type="gene ID" value="TraesKARUn01G0150970"/>
</dbReference>
<dbReference type="Gramene" id="TraesKARUn01G0155900.1">
    <property type="protein sequence ID" value="cds.TraesKARUn01G0155900.1"/>
    <property type="gene ID" value="TraesKARUn01G0155900"/>
</dbReference>
<dbReference type="Gramene" id="TraesKARUn01G0160620.1">
    <property type="protein sequence ID" value="cds.TraesKARUn01G0160620.1"/>
    <property type="gene ID" value="TraesKARUn01G0160620"/>
</dbReference>
<dbReference type="Gramene" id="TraesKARUn01G0162970.1">
    <property type="protein sequence ID" value="cds.TraesKARUn01G0162970.1"/>
    <property type="gene ID" value="TraesKARUn01G0162970"/>
</dbReference>
<dbReference type="Gramene" id="TraesKARUn01G0165070.1">
    <property type="protein sequence ID" value="cds.TraesKARUn01G0165070.1"/>
    <property type="gene ID" value="TraesKARUn01G0165070"/>
</dbReference>
<dbReference type="Gramene" id="TraesKARUn01G0168100.1">
    <property type="protein sequence ID" value="cds.TraesKARUn01G0168100.1"/>
    <property type="gene ID" value="TraesKARUn01G0168100"/>
</dbReference>
<dbReference type="Gramene" id="TraesLAC1D03G00475610.1">
    <property type="protein sequence ID" value="TraesLAC1D03G00475610.1.CDS1"/>
    <property type="gene ID" value="TraesLAC1D03G00475610"/>
</dbReference>
<dbReference type="Gramene" id="TraesLAC3B03G01574820.1">
    <property type="protein sequence ID" value="TraesLAC3B03G01574820.1.CDS1"/>
    <property type="gene ID" value="TraesLAC3B03G01574820"/>
</dbReference>
<dbReference type="Gramene" id="TraesLAC4D03G02411780.1">
    <property type="protein sequence ID" value="TraesLAC4D03G02411780.1.CDS1"/>
    <property type="gene ID" value="TraesLAC4D03G02411780"/>
</dbReference>
<dbReference type="Gramene" id="TraesLAC7A03G03826270.1">
    <property type="protein sequence ID" value="TraesLAC7A03G03826270.1.CDS1"/>
    <property type="gene ID" value="TraesLAC7A03G03826270"/>
</dbReference>
<dbReference type="Gramene" id="TraesLDM1D03G00474740.1">
    <property type="protein sequence ID" value="TraesLDM1D03G00474740.1.CDS1"/>
    <property type="gene ID" value="TraesLDM1D03G00474740"/>
</dbReference>
<dbReference type="Gramene" id="TraesLDM2B03G00832080.1">
    <property type="protein sequence ID" value="TraesLDM2B03G00832080.1.CDS1"/>
    <property type="gene ID" value="TraesLDM2B03G00832080"/>
</dbReference>
<dbReference type="Gramene" id="TraesLDM4A03G02219320.1">
    <property type="protein sequence ID" value="TraesLDM4A03G02219320.1.CDS1"/>
    <property type="gene ID" value="TraesLDM4A03G02219320"/>
</dbReference>
<dbReference type="Gramene" id="TraesLDM4D03G02460780.1">
    <property type="protein sequence ID" value="TraesLDM4D03G02460780.1.CDS1"/>
    <property type="gene ID" value="TraesLDM4D03G02460780"/>
</dbReference>
<dbReference type="Gramene" id="TraesMAC1D03G00471620.1">
    <property type="protein sequence ID" value="TraesMAC1D03G00471620.1.CDS1"/>
    <property type="gene ID" value="TraesMAC1D03G00471620"/>
</dbReference>
<dbReference type="Gramene" id="TraesMAC3A03G01529430.1">
    <property type="protein sequence ID" value="TraesMAC3A03G01529430.1.CDS1"/>
    <property type="gene ID" value="TraesMAC3A03G01529430"/>
</dbReference>
<dbReference type="Gramene" id="TraesMAC4D03G02456750.1">
    <property type="protein sequence ID" value="TraesMAC4D03G02456750.1.CDS1"/>
    <property type="gene ID" value="TraesMAC4D03G02456750"/>
</dbReference>
<dbReference type="Gramene" id="TraesMAC7A03G03874240.1">
    <property type="protein sequence ID" value="TraesMAC7A03G03874240.1.CDS1"/>
    <property type="gene ID" value="TraesMAC7A03G03874240"/>
</dbReference>
<dbReference type="Gramene" id="TraesNOR1D03G00479540.1">
    <property type="protein sequence ID" value="TraesNOR1D03G00479540.1.CDS1"/>
    <property type="gene ID" value="TraesNOR1D03G00479540"/>
</dbReference>
<dbReference type="Gramene" id="TraesNOR4D03G02476240.1">
    <property type="protein sequence ID" value="TraesNOR4D03G02476240.1.CDS1"/>
    <property type="gene ID" value="TraesNOR4D03G02476240"/>
</dbReference>
<dbReference type="Gramene" id="TraesNORUn03G04630870.1">
    <property type="protein sequence ID" value="TraesNORUn03G04630870.1.CDS1"/>
    <property type="gene ID" value="TraesNORUn03G04630870"/>
</dbReference>
<dbReference type="Gramene" id="TraesPARA_EIv1.0_0265780.1">
    <property type="protein sequence ID" value="TraesPARA_EIv1.0_0265780.1.CDS1"/>
    <property type="gene ID" value="TraesPARA_EIv1.0_0265780"/>
</dbReference>
<dbReference type="Gramene" id="TraesPARA_EIv1.0_0614910.1">
    <property type="protein sequence ID" value="TraesPARA_EIv1.0_0614910.1.CDS1"/>
    <property type="gene ID" value="TraesPARA_EIv1.0_0614910"/>
</dbReference>
<dbReference type="Gramene" id="TraesPARA_EIv1.0_1436480.1">
    <property type="protein sequence ID" value="TraesPARA_EIv1.0_1436480.1.CDS1"/>
    <property type="gene ID" value="TraesPARA_EIv1.0_1436480"/>
</dbReference>
<dbReference type="Gramene" id="TraesPARA_EIv1.0_2273090.1">
    <property type="protein sequence ID" value="TraesPARA_EIv1.0_2273090.1.CDS1"/>
    <property type="gene ID" value="TraesPARA_EIv1.0_2273090"/>
</dbReference>
<dbReference type="Gramene" id="TraesPARA_EIv1.0_2397030.1">
    <property type="protein sequence ID" value="TraesPARA_EIv1.0_2397030.1.CDS1"/>
    <property type="gene ID" value="TraesPARA_EIv1.0_2397030"/>
</dbReference>
<dbReference type="Gramene" id="TraesPARA_EIv1.0_2630530.1">
    <property type="protein sequence ID" value="TraesPARA_EIv1.0_2630530.1.CDS1"/>
    <property type="gene ID" value="TraesPARA_EIv1.0_2630530"/>
</dbReference>
<dbReference type="Gramene" id="TraesPARA_EIv1.0_2670670.1">
    <property type="protein sequence ID" value="TraesPARA_EIv1.0_2670670.1.CDS1"/>
    <property type="gene ID" value="TraesPARA_EIv1.0_2670670"/>
</dbReference>
<dbReference type="Gramene" id="TraesPARA_EIv1.0_2672080.1">
    <property type="protein sequence ID" value="TraesPARA_EIv1.0_2672080.1.CDS1"/>
    <property type="gene ID" value="TraesPARA_EIv1.0_2672080"/>
</dbReference>
<dbReference type="Gramene" id="TraesPARA_EIv1.0_2675430.1">
    <property type="protein sequence ID" value="TraesPARA_EIv1.0_2675430.1.CDS1"/>
    <property type="gene ID" value="TraesPARA_EIv1.0_2675430"/>
</dbReference>
<dbReference type="Gramene" id="TraesPARA_EIv1.0_2675630.1">
    <property type="protein sequence ID" value="TraesPARA_EIv1.0_2675630.1.CDS1"/>
    <property type="gene ID" value="TraesPARA_EIv1.0_2675630"/>
</dbReference>
<dbReference type="Gramene" id="TraesPARA_EIv1.0_2678240.1">
    <property type="protein sequence ID" value="TraesPARA_EIv1.0_2678240.1.CDS1"/>
    <property type="gene ID" value="TraesPARA_EIv1.0_2678240"/>
</dbReference>
<dbReference type="Gramene" id="TraesRN1A0100066400.1">
    <property type="protein sequence ID" value="TraesRN1A0100066400.1"/>
    <property type="gene ID" value="TraesRN1A0100066400"/>
</dbReference>
<dbReference type="Gramene" id="TraesRN1A0100066500.1">
    <property type="protein sequence ID" value="TraesRN1A0100066500.1"/>
    <property type="gene ID" value="TraesRN1A0100066500"/>
</dbReference>
<dbReference type="Gramene" id="TraesRN1A0100066600.1">
    <property type="protein sequence ID" value="TraesRN1A0100066600.1"/>
    <property type="gene ID" value="TraesRN1A0100066600"/>
</dbReference>
<dbReference type="Gramene" id="TraesRN4D0100290500.1">
    <property type="protein sequence ID" value="TraesRN4D0100290500.1"/>
    <property type="gene ID" value="TraesRN4D0100290500"/>
</dbReference>
<dbReference type="Gramene" id="TraesRN4D0100290600.1">
    <property type="protein sequence ID" value="TraesRN4D0100290600.1"/>
    <property type="gene ID" value="TraesRN4D0100290600"/>
</dbReference>
<dbReference type="Gramene" id="TraesRN7D0101129100.1">
    <property type="protein sequence ID" value="TraesRN7D0101129100.1"/>
    <property type="gene ID" value="TraesRN7D0101129100"/>
</dbReference>
<dbReference type="Gramene" id="TraesSTA1D03G00470720.1">
    <property type="protein sequence ID" value="TraesSTA1D03G00470720.1.CDS1"/>
    <property type="gene ID" value="TraesSTA1D03G00470720"/>
</dbReference>
<dbReference type="Gramene" id="TraesSTA2B03G00936880.1">
    <property type="protein sequence ID" value="TraesSTA2B03G00936880.1.CDS1"/>
    <property type="gene ID" value="TraesSTA2B03G00936880"/>
</dbReference>
<dbReference type="Gramene" id="TraesSTA4A03G02216460.1">
    <property type="protein sequence ID" value="TraesSTA4A03G02216460.1.CDS1"/>
    <property type="gene ID" value="TraesSTA4A03G02216460"/>
</dbReference>
<dbReference type="Gramene" id="TraesSTA7A03G03868520.1">
    <property type="protein sequence ID" value="TraesSTA7A03G03868520.1.CDS1"/>
    <property type="gene ID" value="TraesSTA7A03G03868520"/>
</dbReference>
<dbReference type="Gramene" id="TraesSYM1D03G00478610.1">
    <property type="protein sequence ID" value="TraesSYM1D03G00478610.1.CDS1"/>
    <property type="gene ID" value="TraesSYM1D03G00478610"/>
</dbReference>
<dbReference type="Gramene" id="TraesSYM3D03G01832390.1">
    <property type="protein sequence ID" value="TraesSYM3D03G01832390.1.CDS1"/>
    <property type="gene ID" value="TraesSYM3D03G01832390"/>
</dbReference>
<dbReference type="Gramene" id="TraesSYM4D03G02486040.1">
    <property type="protein sequence ID" value="TraesSYM4D03G02486040.1.CDS1"/>
    <property type="gene ID" value="TraesSYM4D03G02486040"/>
</dbReference>
<dbReference type="Gramene" id="TraesSYM7D03G04533700.1">
    <property type="protein sequence ID" value="TraesSYM7D03G04533700.1.CDS1"/>
    <property type="gene ID" value="TraesSYM7D03G04533700"/>
</dbReference>
<dbReference type="eggNOG" id="KOG3311">
    <property type="taxonomic scope" value="Eukaryota"/>
</dbReference>
<dbReference type="HOGENOM" id="CLU_103849_1_2_1"/>
<dbReference type="OMA" id="RYISISC"/>
<dbReference type="OrthoDB" id="734030at2759"/>
<dbReference type="Proteomes" id="UP000019116">
    <property type="component" value="Unplaced"/>
</dbReference>
<dbReference type="GO" id="GO:0005739">
    <property type="term" value="C:mitochondrion"/>
    <property type="evidence" value="ECO:0007669"/>
    <property type="project" value="UniProtKB-SubCell"/>
</dbReference>
<dbReference type="GO" id="GO:1990904">
    <property type="term" value="C:ribonucleoprotein complex"/>
    <property type="evidence" value="ECO:0007669"/>
    <property type="project" value="UniProtKB-KW"/>
</dbReference>
<dbReference type="GO" id="GO:0005840">
    <property type="term" value="C:ribosome"/>
    <property type="evidence" value="ECO:0007669"/>
    <property type="project" value="UniProtKB-KW"/>
</dbReference>
<dbReference type="GO" id="GO:0019843">
    <property type="term" value="F:rRNA binding"/>
    <property type="evidence" value="ECO:0007669"/>
    <property type="project" value="UniProtKB-KW"/>
</dbReference>
<dbReference type="GO" id="GO:0003735">
    <property type="term" value="F:structural constituent of ribosome"/>
    <property type="evidence" value="ECO:0007669"/>
    <property type="project" value="InterPro"/>
</dbReference>
<dbReference type="GO" id="GO:0006412">
    <property type="term" value="P:translation"/>
    <property type="evidence" value="ECO:0007669"/>
    <property type="project" value="InterPro"/>
</dbReference>
<dbReference type="FunFam" id="1.10.8.50:FF:000011">
    <property type="entry name" value="Ribosomal protein S13"/>
    <property type="match status" value="1"/>
</dbReference>
<dbReference type="FunFam" id="4.10.910.10:FF:000003">
    <property type="entry name" value="Ribosomal protein S13"/>
    <property type="match status" value="1"/>
</dbReference>
<dbReference type="Gene3D" id="1.10.8.50">
    <property type="match status" value="1"/>
</dbReference>
<dbReference type="Gene3D" id="4.10.910.10">
    <property type="entry name" value="30s ribosomal protein s13, domain 2"/>
    <property type="match status" value="1"/>
</dbReference>
<dbReference type="HAMAP" id="MF_01315">
    <property type="entry name" value="Ribosomal_uS13"/>
    <property type="match status" value="1"/>
</dbReference>
<dbReference type="InterPro" id="IPR027437">
    <property type="entry name" value="Rbsml_uS13_C"/>
</dbReference>
<dbReference type="InterPro" id="IPR001892">
    <property type="entry name" value="Ribosomal_uS13"/>
</dbReference>
<dbReference type="InterPro" id="IPR010979">
    <property type="entry name" value="Ribosomal_uS13-like_H2TH"/>
</dbReference>
<dbReference type="InterPro" id="IPR018269">
    <property type="entry name" value="Ribosomal_uS13_CS"/>
</dbReference>
<dbReference type="PANTHER" id="PTHR10871">
    <property type="entry name" value="30S RIBOSOMAL PROTEIN S13/40S RIBOSOMAL PROTEIN S18"/>
    <property type="match status" value="1"/>
</dbReference>
<dbReference type="PANTHER" id="PTHR10871:SF8">
    <property type="entry name" value="SMALL RIBOSOMAL SUBUNIT PROTEIN US13M"/>
    <property type="match status" value="1"/>
</dbReference>
<dbReference type="Pfam" id="PF00416">
    <property type="entry name" value="Ribosomal_S13"/>
    <property type="match status" value="1"/>
</dbReference>
<dbReference type="PIRSF" id="PIRSF002134">
    <property type="entry name" value="Ribosomal_S13"/>
    <property type="match status" value="1"/>
</dbReference>
<dbReference type="SUPFAM" id="SSF46946">
    <property type="entry name" value="S13-like H2TH domain"/>
    <property type="match status" value="1"/>
</dbReference>
<dbReference type="PROSITE" id="PS00646">
    <property type="entry name" value="RIBOSOMAL_S13_1"/>
    <property type="match status" value="1"/>
</dbReference>
<dbReference type="PROSITE" id="PS50159">
    <property type="entry name" value="RIBOSOMAL_S13_2"/>
    <property type="match status" value="1"/>
</dbReference>
<sequence length="116" mass="13437">MSYISGARSLPDEQVRIASTKMDGIGPKKAIQLRYRLGISGNIKMNELTKYQIDQIEQMIAQDHVVHWELKRGERADIERLISISRYRGIRHQDGSPLRGQRTHTNARTARKQIRK</sequence>
<comment type="function">
    <text evidence="1">Located at the top of the head of the small subunit, it contacts several helices of the 18S rRNA.</text>
</comment>
<comment type="subunit">
    <text>Part of the small ribosomal subunit.</text>
</comment>
<comment type="subcellular location">
    <subcellularLocation>
        <location>Mitochondrion</location>
    </subcellularLocation>
</comment>
<comment type="similarity">
    <text evidence="3">Belongs to the universal ribosomal protein uS13 family.</text>
</comment>